<accession>Q99T18</accession>
<name>PERR_STAAM</name>
<sequence length="148" mass="17197">MSVEIESIEHELEESIASLRQAGIRITPQRQAILRYLISSHTHPTADEIYQALSPDFPNISVATIYNNLRVFKDIGIVKELTYGDSSSRFDFNTHNHYHIICEQCGKIVDFQYPQLNEIERLAQHMTDFDVTHHRMEIYGVCKECQDK</sequence>
<evidence type="ECO:0000250" key="1"/>
<evidence type="ECO:0000305" key="2"/>
<reference key="1">
    <citation type="journal article" date="2001" name="Lancet">
        <title>Whole genome sequencing of meticillin-resistant Staphylococcus aureus.</title>
        <authorList>
            <person name="Kuroda M."/>
            <person name="Ohta T."/>
            <person name="Uchiyama I."/>
            <person name="Baba T."/>
            <person name="Yuzawa H."/>
            <person name="Kobayashi I."/>
            <person name="Cui L."/>
            <person name="Oguchi A."/>
            <person name="Aoki K."/>
            <person name="Nagai Y."/>
            <person name="Lian J.-Q."/>
            <person name="Ito T."/>
            <person name="Kanamori M."/>
            <person name="Matsumaru H."/>
            <person name="Maruyama A."/>
            <person name="Murakami H."/>
            <person name="Hosoyama A."/>
            <person name="Mizutani-Ui Y."/>
            <person name="Takahashi N.K."/>
            <person name="Sawano T."/>
            <person name="Inoue R."/>
            <person name="Kaito C."/>
            <person name="Sekimizu K."/>
            <person name="Hirakawa H."/>
            <person name="Kuhara S."/>
            <person name="Goto S."/>
            <person name="Yabuzaki J."/>
            <person name="Kanehisa M."/>
            <person name="Yamashita A."/>
            <person name="Oshima K."/>
            <person name="Furuya K."/>
            <person name="Yoshino C."/>
            <person name="Shiba T."/>
            <person name="Hattori M."/>
            <person name="Ogasawara N."/>
            <person name="Hayashi H."/>
            <person name="Hiramatsu K."/>
        </authorList>
    </citation>
    <scope>NUCLEOTIDE SEQUENCE [LARGE SCALE GENOMIC DNA]</scope>
    <source>
        <strain>Mu50 / ATCC 700699</strain>
    </source>
</reference>
<dbReference type="EMBL" id="BA000017">
    <property type="protein sequence ID" value="BAB58023.1"/>
    <property type="molecule type" value="Genomic_DNA"/>
</dbReference>
<dbReference type="RefSeq" id="WP_000110007.1">
    <property type="nucleotide sequence ID" value="NC_002758.2"/>
</dbReference>
<dbReference type="SMR" id="Q99T18"/>
<dbReference type="KEGG" id="sav:SAV1861"/>
<dbReference type="HOGENOM" id="CLU_096072_4_2_9"/>
<dbReference type="PhylomeDB" id="Q99T18"/>
<dbReference type="Proteomes" id="UP000002481">
    <property type="component" value="Chromosome"/>
</dbReference>
<dbReference type="GO" id="GO:0005737">
    <property type="term" value="C:cytoplasm"/>
    <property type="evidence" value="ECO:0007669"/>
    <property type="project" value="UniProtKB-SubCell"/>
</dbReference>
<dbReference type="GO" id="GO:0003700">
    <property type="term" value="F:DNA-binding transcription factor activity"/>
    <property type="evidence" value="ECO:0007669"/>
    <property type="project" value="InterPro"/>
</dbReference>
<dbReference type="GO" id="GO:0000976">
    <property type="term" value="F:transcription cis-regulatory region binding"/>
    <property type="evidence" value="ECO:0007669"/>
    <property type="project" value="TreeGrafter"/>
</dbReference>
<dbReference type="GO" id="GO:0008270">
    <property type="term" value="F:zinc ion binding"/>
    <property type="evidence" value="ECO:0007669"/>
    <property type="project" value="TreeGrafter"/>
</dbReference>
<dbReference type="GO" id="GO:0045892">
    <property type="term" value="P:negative regulation of DNA-templated transcription"/>
    <property type="evidence" value="ECO:0007669"/>
    <property type="project" value="TreeGrafter"/>
</dbReference>
<dbReference type="GO" id="GO:1900376">
    <property type="term" value="P:regulation of secondary metabolite biosynthetic process"/>
    <property type="evidence" value="ECO:0007669"/>
    <property type="project" value="TreeGrafter"/>
</dbReference>
<dbReference type="CDD" id="cd07153">
    <property type="entry name" value="Fur_like"/>
    <property type="match status" value="1"/>
</dbReference>
<dbReference type="FunFam" id="1.10.10.10:FF:000147">
    <property type="entry name" value="Fur family transcriptional regulator"/>
    <property type="match status" value="1"/>
</dbReference>
<dbReference type="FunFam" id="3.30.1490.190:FF:000003">
    <property type="entry name" value="Fur family transcriptional regulator"/>
    <property type="match status" value="1"/>
</dbReference>
<dbReference type="Gene3D" id="3.30.1490.190">
    <property type="match status" value="1"/>
</dbReference>
<dbReference type="Gene3D" id="1.10.10.10">
    <property type="entry name" value="Winged helix-like DNA-binding domain superfamily/Winged helix DNA-binding domain"/>
    <property type="match status" value="1"/>
</dbReference>
<dbReference type="InterPro" id="IPR002481">
    <property type="entry name" value="FUR"/>
</dbReference>
<dbReference type="InterPro" id="IPR043135">
    <property type="entry name" value="Fur_C"/>
</dbReference>
<dbReference type="InterPro" id="IPR036388">
    <property type="entry name" value="WH-like_DNA-bd_sf"/>
</dbReference>
<dbReference type="InterPro" id="IPR036390">
    <property type="entry name" value="WH_DNA-bd_sf"/>
</dbReference>
<dbReference type="PANTHER" id="PTHR33202:SF8">
    <property type="entry name" value="PEROXIDE-RESPONSIVE REPRESSOR PERR"/>
    <property type="match status" value="1"/>
</dbReference>
<dbReference type="PANTHER" id="PTHR33202">
    <property type="entry name" value="ZINC UPTAKE REGULATION PROTEIN"/>
    <property type="match status" value="1"/>
</dbReference>
<dbReference type="Pfam" id="PF01475">
    <property type="entry name" value="FUR"/>
    <property type="match status" value="1"/>
</dbReference>
<dbReference type="SUPFAM" id="SSF46785">
    <property type="entry name" value="Winged helix' DNA-binding domain"/>
    <property type="match status" value="1"/>
</dbReference>
<gene>
    <name type="primary">perR</name>
    <name type="ordered locus">SAV1861</name>
</gene>
<keyword id="KW-0963">Cytoplasm</keyword>
<keyword id="KW-0238">DNA-binding</keyword>
<keyword id="KW-0464">Manganese</keyword>
<keyword id="KW-0479">Metal-binding</keyword>
<keyword id="KW-0678">Repressor</keyword>
<keyword id="KW-0804">Transcription</keyword>
<keyword id="KW-0805">Transcription regulation</keyword>
<keyword id="KW-0862">Zinc</keyword>
<protein>
    <recommendedName>
        <fullName>Peroxide-responsive repressor PerR</fullName>
    </recommendedName>
</protein>
<proteinExistence type="inferred from homology"/>
<comment type="function">
    <text evidence="1">Manganese-dependent repressor that controls a regulon of oxidative stress resistance and iron-storage proteins. May act as a hydrogen peroxide and organic hydroperoxide sensor (By similarity).</text>
</comment>
<comment type="subcellular location">
    <subcellularLocation>
        <location evidence="1">Cytoplasm</location>
    </subcellularLocation>
</comment>
<comment type="similarity">
    <text evidence="2">Belongs to the Fur family.</text>
</comment>
<feature type="chain" id="PRO_0000289014" description="Peroxide-responsive repressor PerR">
    <location>
        <begin position="1"/>
        <end position="148"/>
    </location>
</feature>
<feature type="region of interest" description="DNA-binding" evidence="1">
    <location>
        <begin position="1"/>
        <end position="84"/>
    </location>
</feature>
<feature type="binding site" evidence="1">
    <location>
        <position position="102"/>
    </location>
    <ligand>
        <name>Zn(2+)</name>
        <dbReference type="ChEBI" id="CHEBI:29105"/>
    </ligand>
</feature>
<feature type="binding site" evidence="1">
    <location>
        <position position="105"/>
    </location>
    <ligand>
        <name>Zn(2+)</name>
        <dbReference type="ChEBI" id="CHEBI:29105"/>
    </ligand>
</feature>
<feature type="binding site" evidence="1">
    <location>
        <position position="142"/>
    </location>
    <ligand>
        <name>Zn(2+)</name>
        <dbReference type="ChEBI" id="CHEBI:29105"/>
    </ligand>
</feature>
<feature type="binding site" evidence="1">
    <location>
        <position position="145"/>
    </location>
    <ligand>
        <name>Zn(2+)</name>
        <dbReference type="ChEBI" id="CHEBI:29105"/>
    </ligand>
</feature>
<organism>
    <name type="scientific">Staphylococcus aureus (strain Mu50 / ATCC 700699)</name>
    <dbReference type="NCBI Taxonomy" id="158878"/>
    <lineage>
        <taxon>Bacteria</taxon>
        <taxon>Bacillati</taxon>
        <taxon>Bacillota</taxon>
        <taxon>Bacilli</taxon>
        <taxon>Bacillales</taxon>
        <taxon>Staphylococcaceae</taxon>
        <taxon>Staphylococcus</taxon>
    </lineage>
</organism>